<proteinExistence type="inferred from homology"/>
<keyword id="KW-1003">Cell membrane</keyword>
<keyword id="KW-0449">Lipoprotein</keyword>
<keyword id="KW-0472">Membrane</keyword>
<keyword id="KW-0564">Palmitate</keyword>
<keyword id="KW-1185">Reference proteome</keyword>
<keyword id="KW-0732">Signal</keyword>
<feature type="signal peptide" evidence="1">
    <location>
        <begin position="1"/>
        <end position="19"/>
    </location>
</feature>
<feature type="chain" id="PRO_0000359948" description="SPbeta prophage-derived uncharacterized lipoprotein YokB">
    <location>
        <begin position="20"/>
        <end position="236"/>
    </location>
</feature>
<feature type="region of interest" description="Disordered" evidence="2">
    <location>
        <begin position="23"/>
        <end position="59"/>
    </location>
</feature>
<feature type="region of interest" description="Disordered" evidence="2">
    <location>
        <begin position="204"/>
        <end position="236"/>
    </location>
</feature>
<feature type="compositionally biased region" description="Basic and acidic residues" evidence="2">
    <location>
        <begin position="31"/>
        <end position="53"/>
    </location>
</feature>
<feature type="lipid moiety-binding region" description="N-palmitoyl cysteine" evidence="1">
    <location>
        <position position="20"/>
    </location>
</feature>
<feature type="lipid moiety-binding region" description="S-diacylglycerol cysteine" evidence="1">
    <location>
        <position position="20"/>
    </location>
</feature>
<protein>
    <recommendedName>
        <fullName>SPbeta prophage-derived uncharacterized lipoprotein YokB</fullName>
    </recommendedName>
</protein>
<sequence>MNIRFSMLVCVSFIFFTGGCAESSANSNDGSKNKNESKEESSEEGVKENDNKLADTPNMDDCIEVYGKEECEQITEYYKSEEGQKELDASETDKYSAKSQTSTTHKDIYEKVSWLVKEMFGVPERTIPADYEKSLVEKRDDGLYYIQSSYEIKGTGNQADTYYEFEMLMDNKYNLIDAYFPGSTGRYSRPMVYDKLKNMEIPEVKKVSPEEEKREEKKREETMKSIYGEEHIKDNK</sequence>
<gene>
    <name type="primary">yokB</name>
    <name type="ordered locus">BSU21650</name>
</gene>
<evidence type="ECO:0000255" key="1">
    <source>
        <dbReference type="PROSITE-ProRule" id="PRU00303"/>
    </source>
</evidence>
<evidence type="ECO:0000256" key="2">
    <source>
        <dbReference type="SAM" id="MobiDB-lite"/>
    </source>
</evidence>
<organism>
    <name type="scientific">Bacillus subtilis (strain 168)</name>
    <dbReference type="NCBI Taxonomy" id="224308"/>
    <lineage>
        <taxon>Bacteria</taxon>
        <taxon>Bacillati</taxon>
        <taxon>Bacillota</taxon>
        <taxon>Bacilli</taxon>
        <taxon>Bacillales</taxon>
        <taxon>Bacillaceae</taxon>
        <taxon>Bacillus</taxon>
    </lineage>
</organism>
<comment type="subcellular location">
    <subcellularLocation>
        <location evidence="1">Cell membrane</location>
        <topology evidence="1">Lipid-anchor</topology>
    </subcellularLocation>
</comment>
<name>YOKB_BACSU</name>
<reference key="1">
    <citation type="journal article" date="1997" name="Nature">
        <title>The complete genome sequence of the Gram-positive bacterium Bacillus subtilis.</title>
        <authorList>
            <person name="Kunst F."/>
            <person name="Ogasawara N."/>
            <person name="Moszer I."/>
            <person name="Albertini A.M."/>
            <person name="Alloni G."/>
            <person name="Azevedo V."/>
            <person name="Bertero M.G."/>
            <person name="Bessieres P."/>
            <person name="Bolotin A."/>
            <person name="Borchert S."/>
            <person name="Borriss R."/>
            <person name="Boursier L."/>
            <person name="Brans A."/>
            <person name="Braun M."/>
            <person name="Brignell S.C."/>
            <person name="Bron S."/>
            <person name="Brouillet S."/>
            <person name="Bruschi C.V."/>
            <person name="Caldwell B."/>
            <person name="Capuano V."/>
            <person name="Carter N.M."/>
            <person name="Choi S.-K."/>
            <person name="Codani J.-J."/>
            <person name="Connerton I.F."/>
            <person name="Cummings N.J."/>
            <person name="Daniel R.A."/>
            <person name="Denizot F."/>
            <person name="Devine K.M."/>
            <person name="Duesterhoeft A."/>
            <person name="Ehrlich S.D."/>
            <person name="Emmerson P.T."/>
            <person name="Entian K.-D."/>
            <person name="Errington J."/>
            <person name="Fabret C."/>
            <person name="Ferrari E."/>
            <person name="Foulger D."/>
            <person name="Fritz C."/>
            <person name="Fujita M."/>
            <person name="Fujita Y."/>
            <person name="Fuma S."/>
            <person name="Galizzi A."/>
            <person name="Galleron N."/>
            <person name="Ghim S.-Y."/>
            <person name="Glaser P."/>
            <person name="Goffeau A."/>
            <person name="Golightly E.J."/>
            <person name="Grandi G."/>
            <person name="Guiseppi G."/>
            <person name="Guy B.J."/>
            <person name="Haga K."/>
            <person name="Haiech J."/>
            <person name="Harwood C.R."/>
            <person name="Henaut A."/>
            <person name="Hilbert H."/>
            <person name="Holsappel S."/>
            <person name="Hosono S."/>
            <person name="Hullo M.-F."/>
            <person name="Itaya M."/>
            <person name="Jones L.-M."/>
            <person name="Joris B."/>
            <person name="Karamata D."/>
            <person name="Kasahara Y."/>
            <person name="Klaerr-Blanchard M."/>
            <person name="Klein C."/>
            <person name="Kobayashi Y."/>
            <person name="Koetter P."/>
            <person name="Koningstein G."/>
            <person name="Krogh S."/>
            <person name="Kumano M."/>
            <person name="Kurita K."/>
            <person name="Lapidus A."/>
            <person name="Lardinois S."/>
            <person name="Lauber J."/>
            <person name="Lazarevic V."/>
            <person name="Lee S.-M."/>
            <person name="Levine A."/>
            <person name="Liu H."/>
            <person name="Masuda S."/>
            <person name="Mauel C."/>
            <person name="Medigue C."/>
            <person name="Medina N."/>
            <person name="Mellado R.P."/>
            <person name="Mizuno M."/>
            <person name="Moestl D."/>
            <person name="Nakai S."/>
            <person name="Noback M."/>
            <person name="Noone D."/>
            <person name="O'Reilly M."/>
            <person name="Ogawa K."/>
            <person name="Ogiwara A."/>
            <person name="Oudega B."/>
            <person name="Park S.-H."/>
            <person name="Parro V."/>
            <person name="Pohl T.M."/>
            <person name="Portetelle D."/>
            <person name="Porwollik S."/>
            <person name="Prescott A.M."/>
            <person name="Presecan E."/>
            <person name="Pujic P."/>
            <person name="Purnelle B."/>
            <person name="Rapoport G."/>
            <person name="Rey M."/>
            <person name="Reynolds S."/>
            <person name="Rieger M."/>
            <person name="Rivolta C."/>
            <person name="Rocha E."/>
            <person name="Roche B."/>
            <person name="Rose M."/>
            <person name="Sadaie Y."/>
            <person name="Sato T."/>
            <person name="Scanlan E."/>
            <person name="Schleich S."/>
            <person name="Schroeter R."/>
            <person name="Scoffone F."/>
            <person name="Sekiguchi J."/>
            <person name="Sekowska A."/>
            <person name="Seror S.J."/>
            <person name="Serror P."/>
            <person name="Shin B.-S."/>
            <person name="Soldo B."/>
            <person name="Sorokin A."/>
            <person name="Tacconi E."/>
            <person name="Takagi T."/>
            <person name="Takahashi H."/>
            <person name="Takemaru K."/>
            <person name="Takeuchi M."/>
            <person name="Tamakoshi A."/>
            <person name="Tanaka T."/>
            <person name="Terpstra P."/>
            <person name="Tognoni A."/>
            <person name="Tosato V."/>
            <person name="Uchiyama S."/>
            <person name="Vandenbol M."/>
            <person name="Vannier F."/>
            <person name="Vassarotti A."/>
            <person name="Viari A."/>
            <person name="Wambutt R."/>
            <person name="Wedler E."/>
            <person name="Wedler H."/>
            <person name="Weitzenegger T."/>
            <person name="Winters P."/>
            <person name="Wipat A."/>
            <person name="Yamamoto H."/>
            <person name="Yamane K."/>
            <person name="Yasumoto K."/>
            <person name="Yata K."/>
            <person name="Yoshida K."/>
            <person name="Yoshikawa H.-F."/>
            <person name="Zumstein E."/>
            <person name="Yoshikawa H."/>
            <person name="Danchin A."/>
        </authorList>
    </citation>
    <scope>NUCLEOTIDE SEQUENCE [LARGE SCALE GENOMIC DNA]</scope>
    <source>
        <strain>168</strain>
    </source>
</reference>
<accession>O32005</accession>
<dbReference type="EMBL" id="AL009126">
    <property type="protein sequence ID" value="CAB14083.1"/>
    <property type="molecule type" value="Genomic_DNA"/>
</dbReference>
<dbReference type="RefSeq" id="NP_390048.1">
    <property type="nucleotide sequence ID" value="NC_000964.3"/>
</dbReference>
<dbReference type="RefSeq" id="WP_004398623.1">
    <property type="nucleotide sequence ID" value="NZ_OZ025638.1"/>
</dbReference>
<dbReference type="FunCoup" id="O32005">
    <property type="interactions" value="22"/>
</dbReference>
<dbReference type="STRING" id="224308.BSU21650"/>
<dbReference type="PaxDb" id="224308-BSU21650"/>
<dbReference type="DNASU" id="939110"/>
<dbReference type="EnsemblBacteria" id="CAB14083">
    <property type="protein sequence ID" value="CAB14083"/>
    <property type="gene ID" value="BSU_21650"/>
</dbReference>
<dbReference type="GeneID" id="939110"/>
<dbReference type="KEGG" id="bsu:BSU21650"/>
<dbReference type="PATRIC" id="fig|224308.179.peg.2366"/>
<dbReference type="eggNOG" id="ENOG502ZSBK">
    <property type="taxonomic scope" value="Bacteria"/>
</dbReference>
<dbReference type="InParanoid" id="O32005"/>
<dbReference type="OrthoDB" id="9893268at2"/>
<dbReference type="BioCyc" id="BSUB:BSU21650-MONOMER"/>
<dbReference type="Proteomes" id="UP000001570">
    <property type="component" value="Chromosome"/>
</dbReference>
<dbReference type="GO" id="GO:0005886">
    <property type="term" value="C:plasma membrane"/>
    <property type="evidence" value="ECO:0007669"/>
    <property type="project" value="UniProtKB-SubCell"/>
</dbReference>
<dbReference type="PROSITE" id="PS51257">
    <property type="entry name" value="PROKAR_LIPOPROTEIN"/>
    <property type="match status" value="1"/>
</dbReference>